<reference key="1">
    <citation type="journal article" date="2004" name="Nucleic Acids Res.">
        <title>Whole genome comparisons of serotype 4b and 1/2a strains of the food-borne pathogen Listeria monocytogenes reveal new insights into the core genome components of this species.</title>
        <authorList>
            <person name="Nelson K.E."/>
            <person name="Fouts D.E."/>
            <person name="Mongodin E.F."/>
            <person name="Ravel J."/>
            <person name="DeBoy R.T."/>
            <person name="Kolonay J.F."/>
            <person name="Rasko D.A."/>
            <person name="Angiuoli S.V."/>
            <person name="Gill S.R."/>
            <person name="Paulsen I.T."/>
            <person name="Peterson J.D."/>
            <person name="White O."/>
            <person name="Nelson W.C."/>
            <person name="Nierman W.C."/>
            <person name="Beanan M.J."/>
            <person name="Brinkac L.M."/>
            <person name="Daugherty S.C."/>
            <person name="Dodson R.J."/>
            <person name="Durkin A.S."/>
            <person name="Madupu R."/>
            <person name="Haft D.H."/>
            <person name="Selengut J."/>
            <person name="Van Aken S.E."/>
            <person name="Khouri H.M."/>
            <person name="Fedorova N."/>
            <person name="Forberger H.A."/>
            <person name="Tran B."/>
            <person name="Kathariou S."/>
            <person name="Wonderling L.D."/>
            <person name="Uhlich G.A."/>
            <person name="Bayles D.O."/>
            <person name="Luchansky J.B."/>
            <person name="Fraser C.M."/>
        </authorList>
    </citation>
    <scope>NUCLEOTIDE SEQUENCE [LARGE SCALE GENOMIC DNA]</scope>
    <source>
        <strain>F2365</strain>
    </source>
</reference>
<gene>
    <name evidence="1" type="primary">gpmI</name>
    <name type="synonym">gpmA</name>
    <name type="ordered locus">LMOf2365_2429</name>
</gene>
<organism>
    <name type="scientific">Listeria monocytogenes serotype 4b (strain F2365)</name>
    <dbReference type="NCBI Taxonomy" id="265669"/>
    <lineage>
        <taxon>Bacteria</taxon>
        <taxon>Bacillati</taxon>
        <taxon>Bacillota</taxon>
        <taxon>Bacilli</taxon>
        <taxon>Bacillales</taxon>
        <taxon>Listeriaceae</taxon>
        <taxon>Listeria</taxon>
    </lineage>
</organism>
<accession>Q71WX0</accession>
<keyword id="KW-0324">Glycolysis</keyword>
<keyword id="KW-0413">Isomerase</keyword>
<keyword id="KW-0464">Manganese</keyword>
<keyword id="KW-0479">Metal-binding</keyword>
<comment type="function">
    <text evidence="1">Catalyzes the interconversion of 2-phosphoglycerate and 3-phosphoglycerate.</text>
</comment>
<comment type="catalytic activity">
    <reaction evidence="1">
        <text>(2R)-2-phosphoglycerate = (2R)-3-phosphoglycerate</text>
        <dbReference type="Rhea" id="RHEA:15901"/>
        <dbReference type="ChEBI" id="CHEBI:58272"/>
        <dbReference type="ChEBI" id="CHEBI:58289"/>
        <dbReference type="EC" id="5.4.2.12"/>
    </reaction>
</comment>
<comment type="cofactor">
    <cofactor evidence="1">
        <name>Mn(2+)</name>
        <dbReference type="ChEBI" id="CHEBI:29035"/>
    </cofactor>
    <text evidence="1">Binds 2 manganese ions per subunit.</text>
</comment>
<comment type="pathway">
    <text evidence="1">Carbohydrate degradation; glycolysis; pyruvate from D-glyceraldehyde 3-phosphate: step 3/5.</text>
</comment>
<comment type="subunit">
    <text evidence="1">Monomer.</text>
</comment>
<comment type="similarity">
    <text evidence="1">Belongs to the BPG-independent phosphoglycerate mutase family.</text>
</comment>
<protein>
    <recommendedName>
        <fullName evidence="1">2,3-bisphosphoglycerate-independent phosphoglycerate mutase</fullName>
        <shortName evidence="1">BPG-independent PGAM</shortName>
        <shortName evidence="1">Phosphoglyceromutase</shortName>
        <shortName evidence="1">iPGM</shortName>
        <ecNumber evidence="1">5.4.2.12</ecNumber>
    </recommendedName>
</protein>
<evidence type="ECO:0000255" key="1">
    <source>
        <dbReference type="HAMAP-Rule" id="MF_01038"/>
    </source>
</evidence>
<feature type="chain" id="PRO_0000212164" description="2,3-bisphosphoglycerate-independent phosphoglycerate mutase">
    <location>
        <begin position="1"/>
        <end position="510"/>
    </location>
</feature>
<feature type="active site" description="Phosphoserine intermediate" evidence="1">
    <location>
        <position position="62"/>
    </location>
</feature>
<feature type="binding site" evidence="1">
    <location>
        <position position="12"/>
    </location>
    <ligand>
        <name>Mn(2+)</name>
        <dbReference type="ChEBI" id="CHEBI:29035"/>
        <label>2</label>
    </ligand>
</feature>
<feature type="binding site" evidence="1">
    <location>
        <position position="62"/>
    </location>
    <ligand>
        <name>Mn(2+)</name>
        <dbReference type="ChEBI" id="CHEBI:29035"/>
        <label>2</label>
    </ligand>
</feature>
<feature type="binding site" evidence="1">
    <location>
        <position position="123"/>
    </location>
    <ligand>
        <name>substrate</name>
    </ligand>
</feature>
<feature type="binding site" evidence="1">
    <location>
        <begin position="153"/>
        <end position="154"/>
    </location>
    <ligand>
        <name>substrate</name>
    </ligand>
</feature>
<feature type="binding site" evidence="1">
    <location>
        <position position="185"/>
    </location>
    <ligand>
        <name>substrate</name>
    </ligand>
</feature>
<feature type="binding site" evidence="1">
    <location>
        <position position="191"/>
    </location>
    <ligand>
        <name>substrate</name>
    </ligand>
</feature>
<feature type="binding site" evidence="1">
    <location>
        <begin position="260"/>
        <end position="263"/>
    </location>
    <ligand>
        <name>substrate</name>
    </ligand>
</feature>
<feature type="binding site" evidence="1">
    <location>
        <position position="335"/>
    </location>
    <ligand>
        <name>substrate</name>
    </ligand>
</feature>
<feature type="binding site" evidence="1">
    <location>
        <position position="402"/>
    </location>
    <ligand>
        <name>Mn(2+)</name>
        <dbReference type="ChEBI" id="CHEBI:29035"/>
        <label>1</label>
    </ligand>
</feature>
<feature type="binding site" evidence="1">
    <location>
        <position position="406"/>
    </location>
    <ligand>
        <name>Mn(2+)</name>
        <dbReference type="ChEBI" id="CHEBI:29035"/>
        <label>1</label>
    </ligand>
</feature>
<feature type="binding site" evidence="1">
    <location>
        <position position="443"/>
    </location>
    <ligand>
        <name>Mn(2+)</name>
        <dbReference type="ChEBI" id="CHEBI:29035"/>
        <label>2</label>
    </ligand>
</feature>
<feature type="binding site" evidence="1">
    <location>
        <position position="444"/>
    </location>
    <ligand>
        <name>Mn(2+)</name>
        <dbReference type="ChEBI" id="CHEBI:29035"/>
        <label>2</label>
    </ligand>
</feature>
<feature type="binding site" evidence="1">
    <location>
        <position position="461"/>
    </location>
    <ligand>
        <name>Mn(2+)</name>
        <dbReference type="ChEBI" id="CHEBI:29035"/>
        <label>1</label>
    </ligand>
</feature>
<proteinExistence type="inferred from homology"/>
<dbReference type="EC" id="5.4.2.12" evidence="1"/>
<dbReference type="EMBL" id="AE017262">
    <property type="protein sequence ID" value="AAT05195.1"/>
    <property type="molecule type" value="Genomic_DNA"/>
</dbReference>
<dbReference type="RefSeq" id="WP_003726580.1">
    <property type="nucleotide sequence ID" value="NC_002973.6"/>
</dbReference>
<dbReference type="SMR" id="Q71WX0"/>
<dbReference type="KEGG" id="lmf:LMOf2365_2429"/>
<dbReference type="HOGENOM" id="CLU_026099_2_0_9"/>
<dbReference type="UniPathway" id="UPA00109">
    <property type="reaction ID" value="UER00186"/>
</dbReference>
<dbReference type="GO" id="GO:0005829">
    <property type="term" value="C:cytosol"/>
    <property type="evidence" value="ECO:0007669"/>
    <property type="project" value="TreeGrafter"/>
</dbReference>
<dbReference type="GO" id="GO:0030145">
    <property type="term" value="F:manganese ion binding"/>
    <property type="evidence" value="ECO:0007669"/>
    <property type="project" value="UniProtKB-UniRule"/>
</dbReference>
<dbReference type="GO" id="GO:0004619">
    <property type="term" value="F:phosphoglycerate mutase activity"/>
    <property type="evidence" value="ECO:0007669"/>
    <property type="project" value="UniProtKB-EC"/>
</dbReference>
<dbReference type="GO" id="GO:0006007">
    <property type="term" value="P:glucose catabolic process"/>
    <property type="evidence" value="ECO:0007669"/>
    <property type="project" value="InterPro"/>
</dbReference>
<dbReference type="GO" id="GO:0006096">
    <property type="term" value="P:glycolytic process"/>
    <property type="evidence" value="ECO:0007669"/>
    <property type="project" value="UniProtKB-UniRule"/>
</dbReference>
<dbReference type="CDD" id="cd16010">
    <property type="entry name" value="iPGM"/>
    <property type="match status" value="1"/>
</dbReference>
<dbReference type="FunFam" id="3.40.1450.10:FF:000001">
    <property type="entry name" value="2,3-bisphosphoglycerate-independent phosphoglycerate mutase"/>
    <property type="match status" value="1"/>
</dbReference>
<dbReference type="FunFam" id="3.40.720.10:FF:000001">
    <property type="entry name" value="2,3-bisphosphoglycerate-independent phosphoglycerate mutase"/>
    <property type="match status" value="1"/>
</dbReference>
<dbReference type="Gene3D" id="3.40.720.10">
    <property type="entry name" value="Alkaline Phosphatase, subunit A"/>
    <property type="match status" value="1"/>
</dbReference>
<dbReference type="Gene3D" id="3.40.1450.10">
    <property type="entry name" value="BPG-independent phosphoglycerate mutase, domain B"/>
    <property type="match status" value="1"/>
</dbReference>
<dbReference type="HAMAP" id="MF_01038">
    <property type="entry name" value="GpmI"/>
    <property type="match status" value="1"/>
</dbReference>
<dbReference type="InterPro" id="IPR017850">
    <property type="entry name" value="Alkaline_phosphatase_core_sf"/>
</dbReference>
<dbReference type="InterPro" id="IPR011258">
    <property type="entry name" value="BPG-indep_PGM_N"/>
</dbReference>
<dbReference type="InterPro" id="IPR006124">
    <property type="entry name" value="Metalloenzyme"/>
</dbReference>
<dbReference type="InterPro" id="IPR036646">
    <property type="entry name" value="PGAM_B_sf"/>
</dbReference>
<dbReference type="InterPro" id="IPR005995">
    <property type="entry name" value="Pgm_bpd_ind"/>
</dbReference>
<dbReference type="NCBIfam" id="TIGR01307">
    <property type="entry name" value="pgm_bpd_ind"/>
    <property type="match status" value="1"/>
</dbReference>
<dbReference type="PANTHER" id="PTHR31637">
    <property type="entry name" value="2,3-BISPHOSPHOGLYCERATE-INDEPENDENT PHOSPHOGLYCERATE MUTASE"/>
    <property type="match status" value="1"/>
</dbReference>
<dbReference type="PANTHER" id="PTHR31637:SF0">
    <property type="entry name" value="2,3-BISPHOSPHOGLYCERATE-INDEPENDENT PHOSPHOGLYCERATE MUTASE"/>
    <property type="match status" value="1"/>
</dbReference>
<dbReference type="Pfam" id="PF06415">
    <property type="entry name" value="iPGM_N"/>
    <property type="match status" value="1"/>
</dbReference>
<dbReference type="Pfam" id="PF01676">
    <property type="entry name" value="Metalloenzyme"/>
    <property type="match status" value="1"/>
</dbReference>
<dbReference type="PIRSF" id="PIRSF001492">
    <property type="entry name" value="IPGAM"/>
    <property type="match status" value="1"/>
</dbReference>
<dbReference type="SUPFAM" id="SSF64158">
    <property type="entry name" value="2,3-Bisphosphoglycerate-independent phosphoglycerate mutase, substrate-binding domain"/>
    <property type="match status" value="1"/>
</dbReference>
<dbReference type="SUPFAM" id="SSF53649">
    <property type="entry name" value="Alkaline phosphatase-like"/>
    <property type="match status" value="1"/>
</dbReference>
<sequence length="510" mass="56164">MSKSPVAIIILDGFGKRAETVGNAVAQANKPNFDRYWANFPHGELKAAGLDVGLPEGQMGNSEVGHTNIGAGRIVYQSLTRIDKAIEEGEFQENKALNNAFTHTKENNSDLHLFGLLSDGGVHSHINHLVALLETAKDKGVKNVYIHAFLDGRDVAPQSSLEYLETLQKAISDLNYGAIATVSGRFYAMDRDKRWERVEKAYKAIVNAEGEKFEDPIELVKASYANDKNDEFVVPAIITKDGKPVATVKDNDAVIFFNFRPDRAIQLSNAFTDKEWDHFDRGANHPKNIKFVTMTLYNPSIDAEVAFEPIEMKNVIGEVLSNEGLSQLRIAETEKYPHVTFFMNGGRNEEFPGENRILINSPKVETYDLQPEMSAYEVTDALVEDIKNDKHDAIILNFANPDMVGHSGMLEPTIKAIEAVDENLGRVVDLILEKGGSAIIFADHGNSETMSTPEGKPHTAHTTVPVPVIVTKKGVTLREGGRLADVAPTMLDLLGVKKPAEMTGESLIQK</sequence>
<name>GPMI_LISMF</name>